<organism>
    <name type="scientific">Acinetobacter baumannii (strain AB307-0294)</name>
    <dbReference type="NCBI Taxonomy" id="557600"/>
    <lineage>
        <taxon>Bacteria</taxon>
        <taxon>Pseudomonadati</taxon>
        <taxon>Pseudomonadota</taxon>
        <taxon>Gammaproteobacteria</taxon>
        <taxon>Moraxellales</taxon>
        <taxon>Moraxellaceae</taxon>
        <taxon>Acinetobacter</taxon>
        <taxon>Acinetobacter calcoaceticus/baumannii complex</taxon>
    </lineage>
</organism>
<gene>
    <name evidence="1" type="primary">hutI</name>
    <name type="ordered locus">ABBFA_000079</name>
</gene>
<evidence type="ECO:0000255" key="1">
    <source>
        <dbReference type="HAMAP-Rule" id="MF_00372"/>
    </source>
</evidence>
<reference key="1">
    <citation type="journal article" date="2008" name="J. Bacteriol.">
        <title>Comparative genome sequence analysis of multidrug-resistant Acinetobacter baumannii.</title>
        <authorList>
            <person name="Adams M.D."/>
            <person name="Goglin K."/>
            <person name="Molyneaux N."/>
            <person name="Hujer K.M."/>
            <person name="Lavender H."/>
            <person name="Jamison J.J."/>
            <person name="MacDonald I.J."/>
            <person name="Martin K.M."/>
            <person name="Russo T."/>
            <person name="Campagnari A.A."/>
            <person name="Hujer A.M."/>
            <person name="Bonomo R.A."/>
            <person name="Gill S.R."/>
        </authorList>
    </citation>
    <scope>NUCLEOTIDE SEQUENCE [LARGE SCALE GENOMIC DNA]</scope>
    <source>
        <strain>AB307-0294</strain>
    </source>
</reference>
<comment type="function">
    <text evidence="1">Catalyzes the hydrolytic cleavage of the carbon-nitrogen bond in imidazolone-5-propanoate to yield N-formimidoyl-L-glutamate. It is the third step in the universal histidine degradation pathway.</text>
</comment>
<comment type="catalytic activity">
    <reaction evidence="1">
        <text>4-imidazolone-5-propanoate + H2O = N-formimidoyl-L-glutamate</text>
        <dbReference type="Rhea" id="RHEA:23660"/>
        <dbReference type="ChEBI" id="CHEBI:15377"/>
        <dbReference type="ChEBI" id="CHEBI:58928"/>
        <dbReference type="ChEBI" id="CHEBI:77893"/>
        <dbReference type="EC" id="3.5.2.7"/>
    </reaction>
</comment>
<comment type="cofactor">
    <cofactor evidence="1">
        <name>Zn(2+)</name>
        <dbReference type="ChEBI" id="CHEBI:29105"/>
    </cofactor>
    <cofactor evidence="1">
        <name>Fe(3+)</name>
        <dbReference type="ChEBI" id="CHEBI:29034"/>
    </cofactor>
    <text evidence="1">Binds 1 zinc or iron ion per subunit.</text>
</comment>
<comment type="pathway">
    <text evidence="1">Amino-acid degradation; L-histidine degradation into L-glutamate; N-formimidoyl-L-glutamate from L-histidine: step 3/3.</text>
</comment>
<comment type="subcellular location">
    <subcellularLocation>
        <location evidence="1">Cytoplasm</location>
    </subcellularLocation>
</comment>
<comment type="similarity">
    <text evidence="1">Belongs to the metallo-dependent hydrolases superfamily. HutI family.</text>
</comment>
<sequence>MKKLWQNCHIATMQNGQYSYIEDAAIVTEGHLIHWIGKQQQLPADTYSETVDLNGAWVTPGFIDCHTHSVFGGNRSVEFEKRLQGVSYAEIAASGGGIASTVRATREASEEQLLNSALKRIRCMQQDGVTTIEIKSGYGLNYENERKMLRVIRQIGEKLPMTVKSTCLAAHALPPEYKDQSDAYIEHICTEMLPKLHAEGLVDAVDAFCEHLAFSPAQVERVFKTAQSLGLPVKLHAEQLSSLGGSSLAARYHALSADHLEYMTEDDVKAMAESGTVAVLLPGAFYLLRETQYPPIESLIKHGVRIALSSDLNPGTSPALSLRLMLNMGSTLFRLTPEQALAGITIHAAQALGLEQTHGSLEQGKVADFVAWDIEHPSEIVYWLGGDLPKRVVQHGQEVIF</sequence>
<protein>
    <recommendedName>
        <fullName evidence="1">Imidazolonepropionase</fullName>
        <ecNumber evidence="1">3.5.2.7</ecNumber>
    </recommendedName>
    <alternativeName>
        <fullName evidence="1">Imidazolone-5-propionate hydrolase</fullName>
    </alternativeName>
</protein>
<feature type="chain" id="PRO_1000121523" description="Imidazolonepropionase">
    <location>
        <begin position="1"/>
        <end position="401"/>
    </location>
</feature>
<feature type="binding site" evidence="1">
    <location>
        <position position="66"/>
    </location>
    <ligand>
        <name>Fe(3+)</name>
        <dbReference type="ChEBI" id="CHEBI:29034"/>
    </ligand>
</feature>
<feature type="binding site" evidence="1">
    <location>
        <position position="66"/>
    </location>
    <ligand>
        <name>Zn(2+)</name>
        <dbReference type="ChEBI" id="CHEBI:29105"/>
    </ligand>
</feature>
<feature type="binding site" evidence="1">
    <location>
        <position position="68"/>
    </location>
    <ligand>
        <name>Fe(3+)</name>
        <dbReference type="ChEBI" id="CHEBI:29034"/>
    </ligand>
</feature>
<feature type="binding site" evidence="1">
    <location>
        <position position="68"/>
    </location>
    <ligand>
        <name>Zn(2+)</name>
        <dbReference type="ChEBI" id="CHEBI:29105"/>
    </ligand>
</feature>
<feature type="binding site" evidence="1">
    <location>
        <position position="75"/>
    </location>
    <ligand>
        <name>4-imidazolone-5-propanoate</name>
        <dbReference type="ChEBI" id="CHEBI:77893"/>
    </ligand>
</feature>
<feature type="binding site" evidence="1">
    <location>
        <position position="138"/>
    </location>
    <ligand>
        <name>4-imidazolone-5-propanoate</name>
        <dbReference type="ChEBI" id="CHEBI:77893"/>
    </ligand>
</feature>
<feature type="binding site" evidence="1">
    <location>
        <position position="138"/>
    </location>
    <ligand>
        <name>N-formimidoyl-L-glutamate</name>
        <dbReference type="ChEBI" id="CHEBI:58928"/>
    </ligand>
</feature>
<feature type="binding site" evidence="1">
    <location>
        <position position="171"/>
    </location>
    <ligand>
        <name>4-imidazolone-5-propanoate</name>
        <dbReference type="ChEBI" id="CHEBI:77893"/>
    </ligand>
</feature>
<feature type="binding site" evidence="1">
    <location>
        <position position="236"/>
    </location>
    <ligand>
        <name>Fe(3+)</name>
        <dbReference type="ChEBI" id="CHEBI:29034"/>
    </ligand>
</feature>
<feature type="binding site" evidence="1">
    <location>
        <position position="236"/>
    </location>
    <ligand>
        <name>Zn(2+)</name>
        <dbReference type="ChEBI" id="CHEBI:29105"/>
    </ligand>
</feature>
<feature type="binding site" evidence="1">
    <location>
        <position position="239"/>
    </location>
    <ligand>
        <name>4-imidazolone-5-propanoate</name>
        <dbReference type="ChEBI" id="CHEBI:77893"/>
    </ligand>
</feature>
<feature type="binding site" evidence="1">
    <location>
        <position position="311"/>
    </location>
    <ligand>
        <name>Fe(3+)</name>
        <dbReference type="ChEBI" id="CHEBI:29034"/>
    </ligand>
</feature>
<feature type="binding site" evidence="1">
    <location>
        <position position="311"/>
    </location>
    <ligand>
        <name>Zn(2+)</name>
        <dbReference type="ChEBI" id="CHEBI:29105"/>
    </ligand>
</feature>
<feature type="binding site" evidence="1">
    <location>
        <position position="313"/>
    </location>
    <ligand>
        <name>N-formimidoyl-L-glutamate</name>
        <dbReference type="ChEBI" id="CHEBI:58928"/>
    </ligand>
</feature>
<feature type="binding site" evidence="1">
    <location>
        <position position="315"/>
    </location>
    <ligand>
        <name>N-formimidoyl-L-glutamate</name>
        <dbReference type="ChEBI" id="CHEBI:58928"/>
    </ligand>
</feature>
<feature type="binding site" evidence="1">
    <location>
        <position position="316"/>
    </location>
    <ligand>
        <name>4-imidazolone-5-propanoate</name>
        <dbReference type="ChEBI" id="CHEBI:77893"/>
    </ligand>
</feature>
<proteinExistence type="inferred from homology"/>
<dbReference type="EC" id="3.5.2.7" evidence="1"/>
<dbReference type="EMBL" id="CP001172">
    <property type="protein sequence ID" value="ACJ58828.1"/>
    <property type="molecule type" value="Genomic_DNA"/>
</dbReference>
<dbReference type="RefSeq" id="WP_000737790.1">
    <property type="nucleotide sequence ID" value="NZ_CP001172.1"/>
</dbReference>
<dbReference type="SMR" id="B7GUU8"/>
<dbReference type="HOGENOM" id="CLU_041647_0_0_6"/>
<dbReference type="UniPathway" id="UPA00379">
    <property type="reaction ID" value="UER00551"/>
</dbReference>
<dbReference type="Proteomes" id="UP000006924">
    <property type="component" value="Chromosome"/>
</dbReference>
<dbReference type="GO" id="GO:0005737">
    <property type="term" value="C:cytoplasm"/>
    <property type="evidence" value="ECO:0007669"/>
    <property type="project" value="UniProtKB-SubCell"/>
</dbReference>
<dbReference type="GO" id="GO:0050480">
    <property type="term" value="F:imidazolonepropionase activity"/>
    <property type="evidence" value="ECO:0007669"/>
    <property type="project" value="UniProtKB-UniRule"/>
</dbReference>
<dbReference type="GO" id="GO:0005506">
    <property type="term" value="F:iron ion binding"/>
    <property type="evidence" value="ECO:0007669"/>
    <property type="project" value="UniProtKB-UniRule"/>
</dbReference>
<dbReference type="GO" id="GO:0008270">
    <property type="term" value="F:zinc ion binding"/>
    <property type="evidence" value="ECO:0007669"/>
    <property type="project" value="UniProtKB-UniRule"/>
</dbReference>
<dbReference type="GO" id="GO:0019556">
    <property type="term" value="P:L-histidine catabolic process to glutamate and formamide"/>
    <property type="evidence" value="ECO:0007669"/>
    <property type="project" value="UniProtKB-UniPathway"/>
</dbReference>
<dbReference type="GO" id="GO:0019557">
    <property type="term" value="P:L-histidine catabolic process to glutamate and formate"/>
    <property type="evidence" value="ECO:0007669"/>
    <property type="project" value="UniProtKB-UniPathway"/>
</dbReference>
<dbReference type="CDD" id="cd01296">
    <property type="entry name" value="Imidazolone-5PH"/>
    <property type="match status" value="1"/>
</dbReference>
<dbReference type="FunFam" id="3.20.20.140:FF:000007">
    <property type="entry name" value="Imidazolonepropionase"/>
    <property type="match status" value="1"/>
</dbReference>
<dbReference type="Gene3D" id="3.20.20.140">
    <property type="entry name" value="Metal-dependent hydrolases"/>
    <property type="match status" value="1"/>
</dbReference>
<dbReference type="Gene3D" id="2.30.40.10">
    <property type="entry name" value="Urease, subunit C, domain 1"/>
    <property type="match status" value="1"/>
</dbReference>
<dbReference type="HAMAP" id="MF_00372">
    <property type="entry name" value="HutI"/>
    <property type="match status" value="1"/>
</dbReference>
<dbReference type="InterPro" id="IPR006680">
    <property type="entry name" value="Amidohydro-rel"/>
</dbReference>
<dbReference type="InterPro" id="IPR005920">
    <property type="entry name" value="HutI"/>
</dbReference>
<dbReference type="InterPro" id="IPR011059">
    <property type="entry name" value="Metal-dep_hydrolase_composite"/>
</dbReference>
<dbReference type="InterPro" id="IPR032466">
    <property type="entry name" value="Metal_Hydrolase"/>
</dbReference>
<dbReference type="NCBIfam" id="TIGR01224">
    <property type="entry name" value="hutI"/>
    <property type="match status" value="1"/>
</dbReference>
<dbReference type="PANTHER" id="PTHR42752">
    <property type="entry name" value="IMIDAZOLONEPROPIONASE"/>
    <property type="match status" value="1"/>
</dbReference>
<dbReference type="PANTHER" id="PTHR42752:SF1">
    <property type="entry name" value="IMIDAZOLONEPROPIONASE-RELATED"/>
    <property type="match status" value="1"/>
</dbReference>
<dbReference type="Pfam" id="PF01979">
    <property type="entry name" value="Amidohydro_1"/>
    <property type="match status" value="1"/>
</dbReference>
<dbReference type="SUPFAM" id="SSF51338">
    <property type="entry name" value="Composite domain of metallo-dependent hydrolases"/>
    <property type="match status" value="1"/>
</dbReference>
<dbReference type="SUPFAM" id="SSF51556">
    <property type="entry name" value="Metallo-dependent hydrolases"/>
    <property type="match status" value="1"/>
</dbReference>
<name>HUTI_ACIB3</name>
<accession>B7GUU8</accession>
<keyword id="KW-0963">Cytoplasm</keyword>
<keyword id="KW-0369">Histidine metabolism</keyword>
<keyword id="KW-0378">Hydrolase</keyword>
<keyword id="KW-0408">Iron</keyword>
<keyword id="KW-0479">Metal-binding</keyword>
<keyword id="KW-0862">Zinc</keyword>